<accession>Q9JSZ3</accession>
<accession>A1ITQ2</accession>
<feature type="chain" id="PRO_0000108857" description="Phospho-N-acetylmuramoyl-pentapeptide-transferase">
    <location>
        <begin position="1"/>
        <end position="360"/>
    </location>
</feature>
<feature type="transmembrane region" description="Helical" evidence="1">
    <location>
        <begin position="24"/>
        <end position="44"/>
    </location>
</feature>
<feature type="transmembrane region" description="Helical" evidence="1">
    <location>
        <begin position="69"/>
        <end position="89"/>
    </location>
</feature>
<feature type="transmembrane region" description="Helical" evidence="1">
    <location>
        <begin position="92"/>
        <end position="112"/>
    </location>
</feature>
<feature type="transmembrane region" description="Helical" evidence="1">
    <location>
        <begin position="133"/>
        <end position="153"/>
    </location>
</feature>
<feature type="transmembrane region" description="Helical" evidence="1">
    <location>
        <begin position="158"/>
        <end position="178"/>
    </location>
</feature>
<feature type="transmembrane region" description="Helical" evidence="1">
    <location>
        <begin position="199"/>
        <end position="219"/>
    </location>
</feature>
<feature type="transmembrane region" description="Helical" evidence="1">
    <location>
        <begin position="239"/>
        <end position="259"/>
    </location>
</feature>
<feature type="transmembrane region" description="Helical" evidence="1">
    <location>
        <begin position="263"/>
        <end position="283"/>
    </location>
</feature>
<feature type="transmembrane region" description="Helical" evidence="1">
    <location>
        <begin position="288"/>
        <end position="308"/>
    </location>
</feature>
<feature type="transmembrane region" description="Helical" evidence="1">
    <location>
        <begin position="337"/>
        <end position="357"/>
    </location>
</feature>
<name>MRAY_NEIMA</name>
<reference key="1">
    <citation type="journal article" date="2000" name="Nature">
        <title>Complete DNA sequence of a serogroup A strain of Neisseria meningitidis Z2491.</title>
        <authorList>
            <person name="Parkhill J."/>
            <person name="Achtman M."/>
            <person name="James K.D."/>
            <person name="Bentley S.D."/>
            <person name="Churcher C.M."/>
            <person name="Klee S.R."/>
            <person name="Morelli G."/>
            <person name="Basham D."/>
            <person name="Brown D."/>
            <person name="Chillingworth T."/>
            <person name="Davies R.M."/>
            <person name="Davis P."/>
            <person name="Devlin K."/>
            <person name="Feltwell T."/>
            <person name="Hamlin N."/>
            <person name="Holroyd S."/>
            <person name="Jagels K."/>
            <person name="Leather S."/>
            <person name="Moule S."/>
            <person name="Mungall K.L."/>
            <person name="Quail M.A."/>
            <person name="Rajandream M.A."/>
            <person name="Rutherford K.M."/>
            <person name="Simmonds M."/>
            <person name="Skelton J."/>
            <person name="Whitehead S."/>
            <person name="Spratt B.G."/>
            <person name="Barrell B.G."/>
        </authorList>
    </citation>
    <scope>NUCLEOTIDE SEQUENCE [LARGE SCALE GENOMIC DNA]</scope>
    <source>
        <strain>DSM 15465 / Z2491</strain>
    </source>
</reference>
<dbReference type="EC" id="2.7.8.13" evidence="1"/>
<dbReference type="EMBL" id="AL157959">
    <property type="protein sequence ID" value="CAM09169.1"/>
    <property type="molecule type" value="Genomic_DNA"/>
</dbReference>
<dbReference type="PIR" id="F81777">
    <property type="entry name" value="F81777"/>
</dbReference>
<dbReference type="RefSeq" id="WP_002212490.1">
    <property type="nucleotide sequence ID" value="NC_003116.1"/>
</dbReference>
<dbReference type="SMR" id="Q9JSZ3"/>
<dbReference type="EnsemblBacteria" id="CAM09169">
    <property type="protein sequence ID" value="CAM09169"/>
    <property type="gene ID" value="NMA2066"/>
</dbReference>
<dbReference type="KEGG" id="nma:NMA2066"/>
<dbReference type="HOGENOM" id="CLU_023982_0_0_4"/>
<dbReference type="UniPathway" id="UPA00219"/>
<dbReference type="Proteomes" id="UP000000626">
    <property type="component" value="Chromosome"/>
</dbReference>
<dbReference type="GO" id="GO:0005886">
    <property type="term" value="C:plasma membrane"/>
    <property type="evidence" value="ECO:0007669"/>
    <property type="project" value="UniProtKB-SubCell"/>
</dbReference>
<dbReference type="GO" id="GO:0046872">
    <property type="term" value="F:metal ion binding"/>
    <property type="evidence" value="ECO:0007669"/>
    <property type="project" value="UniProtKB-KW"/>
</dbReference>
<dbReference type="GO" id="GO:0008963">
    <property type="term" value="F:phospho-N-acetylmuramoyl-pentapeptide-transferase activity"/>
    <property type="evidence" value="ECO:0007669"/>
    <property type="project" value="UniProtKB-UniRule"/>
</dbReference>
<dbReference type="GO" id="GO:0051992">
    <property type="term" value="F:UDP-N-acetylmuramoyl-L-alanyl-D-glutamyl-meso-2,6-diaminopimelyl-D-alanyl-D-alanine:undecaprenyl-phosphate transferase activity"/>
    <property type="evidence" value="ECO:0007669"/>
    <property type="project" value="RHEA"/>
</dbReference>
<dbReference type="GO" id="GO:0051301">
    <property type="term" value="P:cell division"/>
    <property type="evidence" value="ECO:0007669"/>
    <property type="project" value="UniProtKB-KW"/>
</dbReference>
<dbReference type="GO" id="GO:0071555">
    <property type="term" value="P:cell wall organization"/>
    <property type="evidence" value="ECO:0007669"/>
    <property type="project" value="UniProtKB-KW"/>
</dbReference>
<dbReference type="GO" id="GO:0009252">
    <property type="term" value="P:peptidoglycan biosynthetic process"/>
    <property type="evidence" value="ECO:0007669"/>
    <property type="project" value="UniProtKB-UniRule"/>
</dbReference>
<dbReference type="GO" id="GO:0008360">
    <property type="term" value="P:regulation of cell shape"/>
    <property type="evidence" value="ECO:0007669"/>
    <property type="project" value="UniProtKB-KW"/>
</dbReference>
<dbReference type="CDD" id="cd06852">
    <property type="entry name" value="GT_MraY"/>
    <property type="match status" value="1"/>
</dbReference>
<dbReference type="HAMAP" id="MF_00038">
    <property type="entry name" value="MraY"/>
    <property type="match status" value="1"/>
</dbReference>
<dbReference type="InterPro" id="IPR000715">
    <property type="entry name" value="Glycosyl_transferase_4"/>
</dbReference>
<dbReference type="InterPro" id="IPR003524">
    <property type="entry name" value="PNAcMuramoyl-5peptid_Trfase"/>
</dbReference>
<dbReference type="InterPro" id="IPR018480">
    <property type="entry name" value="PNAcMuramoyl-5peptid_Trfase_CS"/>
</dbReference>
<dbReference type="NCBIfam" id="TIGR00445">
    <property type="entry name" value="mraY"/>
    <property type="match status" value="1"/>
</dbReference>
<dbReference type="PANTHER" id="PTHR22926">
    <property type="entry name" value="PHOSPHO-N-ACETYLMURAMOYL-PENTAPEPTIDE-TRANSFERASE"/>
    <property type="match status" value="1"/>
</dbReference>
<dbReference type="PANTHER" id="PTHR22926:SF5">
    <property type="entry name" value="PHOSPHO-N-ACETYLMURAMOYL-PENTAPEPTIDE-TRANSFERASE HOMOLOG"/>
    <property type="match status" value="1"/>
</dbReference>
<dbReference type="Pfam" id="PF00953">
    <property type="entry name" value="Glycos_transf_4"/>
    <property type="match status" value="1"/>
</dbReference>
<dbReference type="PROSITE" id="PS01347">
    <property type="entry name" value="MRAY_1"/>
    <property type="match status" value="1"/>
</dbReference>
<dbReference type="PROSITE" id="PS01348">
    <property type="entry name" value="MRAY_2"/>
    <property type="match status" value="1"/>
</dbReference>
<sequence>MFLWLAHFSNWLTGLNIFQYTTFRAVMAALTALAFSLMFGPWTIRRLTALKCGQAVRTDGPQTHLVKNGTPTMGGSLILTAITVSTLLWGNWANPYIWILLGVLLATGALGFYDDWRKVVYKDPNGVSAKFKMVWQSSVAIIAGLALFYLAANSANNILIVPFFKQIALPLGVVGFLVLSYLTIVGTSNAVNLTDGLDGLATFPVVLVAAGLAIFAYASGHSQFAQYLQLPYVAGANEVVIFCTAMCGACLGFLWFNAYPAQVFMGDVGALALGAALGTVAVIVRQEFVLVIMGGLFVVEAVSVMLQVGWYKKTKKRIFLMAPIHHHYEQKGWKETQVVVRFWIITIVLVLIGLSTLKIR</sequence>
<organism>
    <name type="scientific">Neisseria meningitidis serogroup A / serotype 4A (strain DSM 15465 / Z2491)</name>
    <dbReference type="NCBI Taxonomy" id="122587"/>
    <lineage>
        <taxon>Bacteria</taxon>
        <taxon>Pseudomonadati</taxon>
        <taxon>Pseudomonadota</taxon>
        <taxon>Betaproteobacteria</taxon>
        <taxon>Neisseriales</taxon>
        <taxon>Neisseriaceae</taxon>
        <taxon>Neisseria</taxon>
    </lineage>
</organism>
<keyword id="KW-0131">Cell cycle</keyword>
<keyword id="KW-0132">Cell division</keyword>
<keyword id="KW-0997">Cell inner membrane</keyword>
<keyword id="KW-1003">Cell membrane</keyword>
<keyword id="KW-0133">Cell shape</keyword>
<keyword id="KW-0961">Cell wall biogenesis/degradation</keyword>
<keyword id="KW-0460">Magnesium</keyword>
<keyword id="KW-0472">Membrane</keyword>
<keyword id="KW-0479">Metal-binding</keyword>
<keyword id="KW-0573">Peptidoglycan synthesis</keyword>
<keyword id="KW-0808">Transferase</keyword>
<keyword id="KW-0812">Transmembrane</keyword>
<keyword id="KW-1133">Transmembrane helix</keyword>
<comment type="function">
    <text evidence="1">Catalyzes the initial step of the lipid cycle reactions in the biosynthesis of the cell wall peptidoglycan: transfers peptidoglycan precursor phospho-MurNAc-pentapeptide from UDP-MurNAc-pentapeptide onto the lipid carrier undecaprenyl phosphate, yielding undecaprenyl-pyrophosphoryl-MurNAc-pentapeptide, known as lipid I.</text>
</comment>
<comment type="catalytic activity">
    <reaction evidence="1">
        <text>UDP-N-acetyl-alpha-D-muramoyl-L-alanyl-gamma-D-glutamyl-meso-2,6-diaminopimeloyl-D-alanyl-D-alanine + di-trans,octa-cis-undecaprenyl phosphate = di-trans,octa-cis-undecaprenyl diphospho-N-acetyl-alpha-D-muramoyl-L-alanyl-D-glutamyl-meso-2,6-diaminopimeloyl-D-alanyl-D-alanine + UMP</text>
        <dbReference type="Rhea" id="RHEA:28386"/>
        <dbReference type="ChEBI" id="CHEBI:57865"/>
        <dbReference type="ChEBI" id="CHEBI:60392"/>
        <dbReference type="ChEBI" id="CHEBI:61386"/>
        <dbReference type="ChEBI" id="CHEBI:61387"/>
        <dbReference type="EC" id="2.7.8.13"/>
    </reaction>
</comment>
<comment type="cofactor">
    <cofactor evidence="1">
        <name>Mg(2+)</name>
        <dbReference type="ChEBI" id="CHEBI:18420"/>
    </cofactor>
</comment>
<comment type="pathway">
    <text evidence="1">Cell wall biogenesis; peptidoglycan biosynthesis.</text>
</comment>
<comment type="subcellular location">
    <subcellularLocation>
        <location evidence="1">Cell inner membrane</location>
        <topology evidence="1">Multi-pass membrane protein</topology>
    </subcellularLocation>
</comment>
<comment type="similarity">
    <text evidence="1">Belongs to the glycosyltransferase 4 family. MraY subfamily.</text>
</comment>
<evidence type="ECO:0000255" key="1">
    <source>
        <dbReference type="HAMAP-Rule" id="MF_00038"/>
    </source>
</evidence>
<gene>
    <name evidence="1" type="primary">mraY</name>
    <name type="ordered locus">NMA2066</name>
</gene>
<proteinExistence type="inferred from homology"/>
<protein>
    <recommendedName>
        <fullName evidence="1">Phospho-N-acetylmuramoyl-pentapeptide-transferase</fullName>
        <ecNumber evidence="1">2.7.8.13</ecNumber>
    </recommendedName>
    <alternativeName>
        <fullName evidence="1">UDP-MurNAc-pentapeptide phosphotransferase</fullName>
    </alternativeName>
</protein>